<accession>Q186F4</accession>
<organism>
    <name type="scientific">Clostridioides difficile (strain 630)</name>
    <name type="common">Peptoclostridium difficile</name>
    <dbReference type="NCBI Taxonomy" id="272563"/>
    <lineage>
        <taxon>Bacteria</taxon>
        <taxon>Bacillati</taxon>
        <taxon>Bacillota</taxon>
        <taxon>Clostridia</taxon>
        <taxon>Peptostreptococcales</taxon>
        <taxon>Peptostreptococcaceae</taxon>
        <taxon>Clostridioides</taxon>
    </lineage>
</organism>
<keyword id="KW-0067">ATP-binding</keyword>
<keyword id="KW-0418">Kinase</keyword>
<keyword id="KW-0460">Magnesium</keyword>
<keyword id="KW-0479">Metal-binding</keyword>
<keyword id="KW-0547">Nucleotide-binding</keyword>
<keyword id="KW-1185">Reference proteome</keyword>
<keyword id="KW-0784">Thiamine biosynthesis</keyword>
<keyword id="KW-0808">Transferase</keyword>
<proteinExistence type="inferred from homology"/>
<comment type="function">
    <text evidence="1">Catalyzes the phosphorylation of the hydroxyl group of 4-methyl-5-beta-hydroxyethylthiazole (THZ).</text>
</comment>
<comment type="catalytic activity">
    <reaction evidence="1">
        <text>5-(2-hydroxyethyl)-4-methylthiazole + ATP = 4-methyl-5-(2-phosphooxyethyl)-thiazole + ADP + H(+)</text>
        <dbReference type="Rhea" id="RHEA:24212"/>
        <dbReference type="ChEBI" id="CHEBI:15378"/>
        <dbReference type="ChEBI" id="CHEBI:17957"/>
        <dbReference type="ChEBI" id="CHEBI:30616"/>
        <dbReference type="ChEBI" id="CHEBI:58296"/>
        <dbReference type="ChEBI" id="CHEBI:456216"/>
        <dbReference type="EC" id="2.7.1.50"/>
    </reaction>
</comment>
<comment type="cofactor">
    <cofactor evidence="1">
        <name>Mg(2+)</name>
        <dbReference type="ChEBI" id="CHEBI:18420"/>
    </cofactor>
</comment>
<comment type="pathway">
    <text evidence="1">Cofactor biosynthesis; thiamine diphosphate biosynthesis; 4-methyl-5-(2-phosphoethyl)-thiazole from 5-(2-hydroxyethyl)-4-methylthiazole: step 1/1.</text>
</comment>
<comment type="similarity">
    <text evidence="1">Belongs to the Thz kinase family.</text>
</comment>
<evidence type="ECO:0000255" key="1">
    <source>
        <dbReference type="HAMAP-Rule" id="MF_00228"/>
    </source>
</evidence>
<sequence>MYNLIKDVKKLNPLVIHYTNNVTINDCANVTLAVGASPLMSFSYEEVEEMVSVANSVVINIGTMNSNMLDLFLLAGKAANKYNKPVVLDPVGVFASKARAELTSRLLNEVKFSVVKGNVSEIKFIGGFNVRGKGVDSFDEEEDSTEIIRKIAEKLECVVVATGKIDIITNGKGTYKINNGTDKLKGITGTGCMTASLIASFMAVTENILEAATMGVLTMSLSGELANLNNPPIGTFKENLMNAIYQMDIDALSKNSNIEFLN</sequence>
<gene>
    <name evidence="1" type="primary">thiM</name>
    <name type="ordered locus">CD630_16000</name>
</gene>
<reference key="1">
    <citation type="journal article" date="2006" name="Nat. Genet.">
        <title>The multidrug-resistant human pathogen Clostridium difficile has a highly mobile, mosaic genome.</title>
        <authorList>
            <person name="Sebaihia M."/>
            <person name="Wren B.W."/>
            <person name="Mullany P."/>
            <person name="Fairweather N.F."/>
            <person name="Minton N."/>
            <person name="Stabler R."/>
            <person name="Thomson N.R."/>
            <person name="Roberts A.P."/>
            <person name="Cerdeno-Tarraga A.M."/>
            <person name="Wang H."/>
            <person name="Holden M.T.G."/>
            <person name="Wright A."/>
            <person name="Churcher C."/>
            <person name="Quail M.A."/>
            <person name="Baker S."/>
            <person name="Bason N."/>
            <person name="Brooks K."/>
            <person name="Chillingworth T."/>
            <person name="Cronin A."/>
            <person name="Davis P."/>
            <person name="Dowd L."/>
            <person name="Fraser A."/>
            <person name="Feltwell T."/>
            <person name="Hance Z."/>
            <person name="Holroyd S."/>
            <person name="Jagels K."/>
            <person name="Moule S."/>
            <person name="Mungall K."/>
            <person name="Price C."/>
            <person name="Rabbinowitsch E."/>
            <person name="Sharp S."/>
            <person name="Simmonds M."/>
            <person name="Stevens K."/>
            <person name="Unwin L."/>
            <person name="Whithead S."/>
            <person name="Dupuy B."/>
            <person name="Dougan G."/>
            <person name="Barrell B."/>
            <person name="Parkhill J."/>
        </authorList>
    </citation>
    <scope>NUCLEOTIDE SEQUENCE [LARGE SCALE GENOMIC DNA]</scope>
    <source>
        <strain>630</strain>
    </source>
</reference>
<protein>
    <recommendedName>
        <fullName evidence="1">Hydroxyethylthiazole kinase</fullName>
        <ecNumber evidence="1">2.7.1.50</ecNumber>
    </recommendedName>
    <alternativeName>
        <fullName evidence="1">4-methyl-5-beta-hydroxyethylthiazole kinase</fullName>
        <shortName evidence="1">TH kinase</shortName>
        <shortName evidence="1">Thz kinase</shortName>
    </alternativeName>
</protein>
<feature type="chain" id="PRO_0000336550" description="Hydroxyethylthiazole kinase">
    <location>
        <begin position="1"/>
        <end position="262"/>
    </location>
</feature>
<feature type="binding site" evidence="1">
    <location>
        <position position="40"/>
    </location>
    <ligand>
        <name>substrate</name>
    </ligand>
</feature>
<feature type="binding site" evidence="1">
    <location>
        <position position="116"/>
    </location>
    <ligand>
        <name>ATP</name>
        <dbReference type="ChEBI" id="CHEBI:30616"/>
    </ligand>
</feature>
<feature type="binding site" evidence="1">
    <location>
        <position position="162"/>
    </location>
    <ligand>
        <name>ATP</name>
        <dbReference type="ChEBI" id="CHEBI:30616"/>
    </ligand>
</feature>
<feature type="binding site" evidence="1">
    <location>
        <position position="189"/>
    </location>
    <ligand>
        <name>substrate</name>
    </ligand>
</feature>
<name>THIM_CLOD6</name>
<dbReference type="EC" id="2.7.1.50" evidence="1"/>
<dbReference type="EMBL" id="AM180355">
    <property type="protein sequence ID" value="CAJ68465.1"/>
    <property type="molecule type" value="Genomic_DNA"/>
</dbReference>
<dbReference type="RefSeq" id="WP_011861269.1">
    <property type="nucleotide sequence ID" value="NZ_JAUPES010000013.1"/>
</dbReference>
<dbReference type="RefSeq" id="YP_001088101.1">
    <property type="nucleotide sequence ID" value="NC_009089.1"/>
</dbReference>
<dbReference type="SMR" id="Q186F4"/>
<dbReference type="STRING" id="272563.CD630_16000"/>
<dbReference type="EnsemblBacteria" id="CAJ68465">
    <property type="protein sequence ID" value="CAJ68465"/>
    <property type="gene ID" value="CD630_16000"/>
</dbReference>
<dbReference type="GeneID" id="66354010"/>
<dbReference type="KEGG" id="cdf:CD630_16000"/>
<dbReference type="KEGG" id="pdc:CDIF630_01775"/>
<dbReference type="PATRIC" id="fig|272563.120.peg.1676"/>
<dbReference type="eggNOG" id="COG2145">
    <property type="taxonomic scope" value="Bacteria"/>
</dbReference>
<dbReference type="OrthoDB" id="9778146at2"/>
<dbReference type="PhylomeDB" id="Q186F4"/>
<dbReference type="BioCyc" id="PDIF272563:G12WB-1739-MONOMER"/>
<dbReference type="UniPathway" id="UPA00060">
    <property type="reaction ID" value="UER00139"/>
</dbReference>
<dbReference type="Proteomes" id="UP000001978">
    <property type="component" value="Chromosome"/>
</dbReference>
<dbReference type="GO" id="GO:0005829">
    <property type="term" value="C:cytosol"/>
    <property type="evidence" value="ECO:0007669"/>
    <property type="project" value="TreeGrafter"/>
</dbReference>
<dbReference type="GO" id="GO:0005524">
    <property type="term" value="F:ATP binding"/>
    <property type="evidence" value="ECO:0007669"/>
    <property type="project" value="UniProtKB-UniRule"/>
</dbReference>
<dbReference type="GO" id="GO:0004417">
    <property type="term" value="F:hydroxyethylthiazole kinase activity"/>
    <property type="evidence" value="ECO:0007669"/>
    <property type="project" value="UniProtKB-UniRule"/>
</dbReference>
<dbReference type="GO" id="GO:0008902">
    <property type="term" value="F:hydroxymethylpyrimidine kinase activity"/>
    <property type="evidence" value="ECO:0007669"/>
    <property type="project" value="TreeGrafter"/>
</dbReference>
<dbReference type="GO" id="GO:0000287">
    <property type="term" value="F:magnesium ion binding"/>
    <property type="evidence" value="ECO:0007669"/>
    <property type="project" value="UniProtKB-UniRule"/>
</dbReference>
<dbReference type="GO" id="GO:0008972">
    <property type="term" value="F:phosphomethylpyrimidine kinase activity"/>
    <property type="evidence" value="ECO:0007669"/>
    <property type="project" value="TreeGrafter"/>
</dbReference>
<dbReference type="GO" id="GO:0009228">
    <property type="term" value="P:thiamine biosynthetic process"/>
    <property type="evidence" value="ECO:0007669"/>
    <property type="project" value="UniProtKB-KW"/>
</dbReference>
<dbReference type="GO" id="GO:0009229">
    <property type="term" value="P:thiamine diphosphate biosynthetic process"/>
    <property type="evidence" value="ECO:0007669"/>
    <property type="project" value="UniProtKB-UniRule"/>
</dbReference>
<dbReference type="CDD" id="cd01170">
    <property type="entry name" value="THZ_kinase"/>
    <property type="match status" value="1"/>
</dbReference>
<dbReference type="Gene3D" id="3.40.1190.20">
    <property type="match status" value="1"/>
</dbReference>
<dbReference type="HAMAP" id="MF_00228">
    <property type="entry name" value="Thz_kinase"/>
    <property type="match status" value="1"/>
</dbReference>
<dbReference type="InterPro" id="IPR000417">
    <property type="entry name" value="Hyethyz_kinase"/>
</dbReference>
<dbReference type="InterPro" id="IPR029056">
    <property type="entry name" value="Ribokinase-like"/>
</dbReference>
<dbReference type="NCBIfam" id="NF006830">
    <property type="entry name" value="PRK09355.1"/>
    <property type="match status" value="1"/>
</dbReference>
<dbReference type="NCBIfam" id="TIGR00694">
    <property type="entry name" value="thiM"/>
    <property type="match status" value="1"/>
</dbReference>
<dbReference type="PANTHER" id="PTHR20858:SF17">
    <property type="entry name" value="HYDROXYMETHYLPYRIMIDINE_PHOSPHOMETHYLPYRIMIDINE KINASE THI20-RELATED"/>
    <property type="match status" value="1"/>
</dbReference>
<dbReference type="PANTHER" id="PTHR20858">
    <property type="entry name" value="PHOSPHOMETHYLPYRIMIDINE KINASE"/>
    <property type="match status" value="1"/>
</dbReference>
<dbReference type="Pfam" id="PF02110">
    <property type="entry name" value="HK"/>
    <property type="match status" value="1"/>
</dbReference>
<dbReference type="PIRSF" id="PIRSF000513">
    <property type="entry name" value="Thz_kinase"/>
    <property type="match status" value="1"/>
</dbReference>
<dbReference type="PRINTS" id="PR01099">
    <property type="entry name" value="HYETHTZKNASE"/>
</dbReference>
<dbReference type="SUPFAM" id="SSF53613">
    <property type="entry name" value="Ribokinase-like"/>
    <property type="match status" value="1"/>
</dbReference>